<feature type="chain" id="PRO_0000169151" description="Zinc chaperone YeiR">
    <location>
        <begin position="1"/>
        <end position="328"/>
    </location>
</feature>
<feature type="domain" description="CobW C-terminal" evidence="3">
    <location>
        <begin position="241"/>
        <end position="321"/>
    </location>
</feature>
<feature type="short sequence motif" description="CXCC motif" evidence="3">
    <location>
        <begin position="63"/>
        <end position="66"/>
    </location>
</feature>
<feature type="binding site" evidence="1">
    <location>
        <begin position="9"/>
        <end position="17"/>
    </location>
    <ligand>
        <name>GTP</name>
        <dbReference type="ChEBI" id="CHEBI:37565"/>
    </ligand>
</feature>
<feature type="binding site" evidence="1">
    <location>
        <position position="155"/>
    </location>
    <ligand>
        <name>GTP</name>
        <dbReference type="ChEBI" id="CHEBI:37565"/>
    </ligand>
</feature>
<feature type="sequence conflict" description="In Ref. 4; AAA60521." evidence="5" ref="4">
    <original>DLL</original>
    <variation>LSF</variation>
    <location>
        <begin position="103"/>
        <end position="105"/>
    </location>
</feature>
<feature type="sequence conflict" description="In Ref. 1." evidence="5" ref="1">
    <original>GDDLHIETQNVAPPDSRIELISSSEADWNALQSALLKLRLATTA</original>
    <variation>AMTCTLKRKTLRHRTAVLS</variation>
    <location>
        <begin position="285"/>
        <end position="328"/>
    </location>
</feature>
<evidence type="ECO:0000250" key="1">
    <source>
        <dbReference type="UniProtKB" id="P9WPZ1"/>
    </source>
</evidence>
<evidence type="ECO:0000250" key="2">
    <source>
        <dbReference type="UniProtKB" id="Q8VEH6"/>
    </source>
</evidence>
<evidence type="ECO:0000255" key="3"/>
<evidence type="ECO:0000269" key="4">
    <source>
    </source>
</evidence>
<evidence type="ECO:0000305" key="5"/>
<reference key="1">
    <citation type="journal article" date="1996" name="DNA Res.">
        <title>A 460-kb DNA sequence of the Escherichia coli K-12 genome corresponding to the 40.1-50.0 min region on the linkage map.</title>
        <authorList>
            <person name="Itoh T."/>
            <person name="Aiba H."/>
            <person name="Baba T."/>
            <person name="Fujita K."/>
            <person name="Hayashi K."/>
            <person name="Inada T."/>
            <person name="Isono K."/>
            <person name="Kasai H."/>
            <person name="Kimura S."/>
            <person name="Kitakawa M."/>
            <person name="Kitagawa M."/>
            <person name="Makino K."/>
            <person name="Miki T."/>
            <person name="Mizobuchi K."/>
            <person name="Mori H."/>
            <person name="Mori T."/>
            <person name="Motomura K."/>
            <person name="Nakade S."/>
            <person name="Nakamura Y."/>
            <person name="Nashimoto H."/>
            <person name="Nishio Y."/>
            <person name="Oshima T."/>
            <person name="Saito N."/>
            <person name="Sampei G."/>
            <person name="Seki Y."/>
            <person name="Sivasundaram S."/>
            <person name="Tagami H."/>
            <person name="Takeda J."/>
            <person name="Takemoto K."/>
            <person name="Wada C."/>
            <person name="Yamamoto Y."/>
            <person name="Horiuchi T."/>
        </authorList>
    </citation>
    <scope>NUCLEOTIDE SEQUENCE [LARGE SCALE GENOMIC DNA]</scope>
    <source>
        <strain>K12 / W3110 / ATCC 27325 / DSM 5911</strain>
    </source>
</reference>
<reference key="2">
    <citation type="journal article" date="1997" name="Science">
        <title>The complete genome sequence of Escherichia coli K-12.</title>
        <authorList>
            <person name="Blattner F.R."/>
            <person name="Plunkett G. III"/>
            <person name="Bloch C.A."/>
            <person name="Perna N.T."/>
            <person name="Burland V."/>
            <person name="Riley M."/>
            <person name="Collado-Vides J."/>
            <person name="Glasner J.D."/>
            <person name="Rode C.K."/>
            <person name="Mayhew G.F."/>
            <person name="Gregor J."/>
            <person name="Davis N.W."/>
            <person name="Kirkpatrick H.A."/>
            <person name="Goeden M.A."/>
            <person name="Rose D.J."/>
            <person name="Mau B."/>
            <person name="Shao Y."/>
        </authorList>
    </citation>
    <scope>NUCLEOTIDE SEQUENCE [LARGE SCALE GENOMIC DNA]</scope>
    <source>
        <strain>K12 / MG1655 / ATCC 47076</strain>
    </source>
</reference>
<reference key="3">
    <citation type="journal article" date="2006" name="Mol. Syst. Biol.">
        <title>Highly accurate genome sequences of Escherichia coli K-12 strains MG1655 and W3110.</title>
        <authorList>
            <person name="Hayashi K."/>
            <person name="Morooka N."/>
            <person name="Yamamoto Y."/>
            <person name="Fujita K."/>
            <person name="Isono K."/>
            <person name="Choi S."/>
            <person name="Ohtsubo E."/>
            <person name="Baba T."/>
            <person name="Wanner B.L."/>
            <person name="Mori H."/>
            <person name="Horiuchi T."/>
        </authorList>
    </citation>
    <scope>NUCLEOTIDE SEQUENCE [LARGE SCALE GENOMIC DNA]</scope>
    <scope>SEQUENCE REVISION TO 285-328</scope>
    <source>
        <strain>K12 / W3110 / ATCC 27325 / DSM 5911</strain>
    </source>
</reference>
<reference key="4">
    <citation type="submission" date="1993-10" db="EMBL/GenBank/DDBJ databases">
        <title>Automated multiplex sequencing of the E.coli genome.</title>
        <authorList>
            <person name="Richterich P."/>
            <person name="Lakey N."/>
            <person name="Gryan G."/>
            <person name="Jaehn L."/>
            <person name="Mintz L."/>
            <person name="Robison K."/>
            <person name="Church G.M."/>
        </authorList>
    </citation>
    <scope>NUCLEOTIDE SEQUENCE [LARGE SCALE GENOMIC DNA] OF 1-105</scope>
    <source>
        <strain>K12 / BHB2600</strain>
    </source>
</reference>
<reference key="5">
    <citation type="journal article" date="2012" name="Metallomics">
        <title>YeiR: a metal-binding GTPase from Escherichia coli involved in metal homeostasis.</title>
        <authorList>
            <person name="Blaby-Haas C.E."/>
            <person name="Flood J.A."/>
            <person name="de Crecy-Lagard V."/>
            <person name="Zamble D.B."/>
        </authorList>
    </citation>
    <scope>CATALYTIC ACTIVITY</scope>
    <scope>ACTIVITY REGULATION</scope>
    <scope>BIOPHYSICOCHEMICAL PROPERTIES</scope>
    <scope>SUBUNIT</scope>
    <scope>DISRUPTION PHENOTYPE</scope>
    <source>
        <strain>K12 / MG1655 / ATCC 47076</strain>
    </source>
</reference>
<protein>
    <recommendedName>
        <fullName evidence="5">Zinc chaperone YeiR</fullName>
        <ecNumber evidence="4">3.6.5.-</ecNumber>
    </recommendedName>
</protein>
<dbReference type="EC" id="3.6.5.-" evidence="4"/>
<dbReference type="EMBL" id="U00096">
    <property type="protein sequence ID" value="AAC75234.1"/>
    <property type="molecule type" value="Genomic_DNA"/>
</dbReference>
<dbReference type="EMBL" id="AP009048">
    <property type="protein sequence ID" value="BAA15982.2"/>
    <property type="molecule type" value="Genomic_DNA"/>
</dbReference>
<dbReference type="EMBL" id="U00007">
    <property type="protein sequence ID" value="AAA60521.2"/>
    <property type="molecule type" value="Genomic_DNA"/>
</dbReference>
<dbReference type="PIR" id="D64986">
    <property type="entry name" value="D64986"/>
</dbReference>
<dbReference type="RefSeq" id="NP_416678.1">
    <property type="nucleotide sequence ID" value="NC_000913.3"/>
</dbReference>
<dbReference type="RefSeq" id="WP_000198828.1">
    <property type="nucleotide sequence ID" value="NZ_LN832404.1"/>
</dbReference>
<dbReference type="SMR" id="P33030"/>
<dbReference type="BioGRID" id="4260468">
    <property type="interactions" value="326"/>
</dbReference>
<dbReference type="BioGRID" id="851042">
    <property type="interactions" value="6"/>
</dbReference>
<dbReference type="DIP" id="DIP-11929N"/>
<dbReference type="FunCoup" id="P33030">
    <property type="interactions" value="114"/>
</dbReference>
<dbReference type="IntAct" id="P33030">
    <property type="interactions" value="14"/>
</dbReference>
<dbReference type="STRING" id="511145.b2173"/>
<dbReference type="jPOST" id="P33030"/>
<dbReference type="PaxDb" id="511145-b2173"/>
<dbReference type="EnsemblBacteria" id="AAC75234">
    <property type="protein sequence ID" value="AAC75234"/>
    <property type="gene ID" value="b2173"/>
</dbReference>
<dbReference type="GeneID" id="946701"/>
<dbReference type="KEGG" id="ecj:JW2161"/>
<dbReference type="KEGG" id="eco:b2173"/>
<dbReference type="KEGG" id="ecoc:C3026_12160"/>
<dbReference type="PATRIC" id="fig|1411691.4.peg.63"/>
<dbReference type="EchoBASE" id="EB2028"/>
<dbReference type="eggNOG" id="COG0523">
    <property type="taxonomic scope" value="Bacteria"/>
</dbReference>
<dbReference type="HOGENOM" id="CLU_017452_1_2_6"/>
<dbReference type="InParanoid" id="P33030"/>
<dbReference type="OMA" id="WSIGWRW"/>
<dbReference type="OrthoDB" id="9808822at2"/>
<dbReference type="PhylomeDB" id="P33030"/>
<dbReference type="BioCyc" id="EcoCyc:EG12104-MONOMER"/>
<dbReference type="BioCyc" id="MetaCyc:EG12104-MONOMER"/>
<dbReference type="PRO" id="PR:P33030"/>
<dbReference type="Proteomes" id="UP000000625">
    <property type="component" value="Chromosome"/>
</dbReference>
<dbReference type="GO" id="GO:0005737">
    <property type="term" value="C:cytoplasm"/>
    <property type="evidence" value="ECO:0000318"/>
    <property type="project" value="GO_Central"/>
</dbReference>
<dbReference type="GO" id="GO:0005525">
    <property type="term" value="F:GTP binding"/>
    <property type="evidence" value="ECO:0007669"/>
    <property type="project" value="UniProtKB-KW"/>
</dbReference>
<dbReference type="GO" id="GO:0003924">
    <property type="term" value="F:GTPase activity"/>
    <property type="evidence" value="ECO:0000314"/>
    <property type="project" value="EcoCyc"/>
</dbReference>
<dbReference type="GO" id="GO:0008270">
    <property type="term" value="F:zinc ion binding"/>
    <property type="evidence" value="ECO:0000314"/>
    <property type="project" value="EcoCyc"/>
</dbReference>
<dbReference type="CDD" id="cd03112">
    <property type="entry name" value="CobW-like"/>
    <property type="match status" value="1"/>
</dbReference>
<dbReference type="FunFam" id="3.40.50.300:FF:000889">
    <property type="entry name" value="Cobalamin synthesis protein P47K"/>
    <property type="match status" value="1"/>
</dbReference>
<dbReference type="Gene3D" id="3.40.50.300">
    <property type="entry name" value="P-loop containing nucleotide triphosphate hydrolases"/>
    <property type="match status" value="1"/>
</dbReference>
<dbReference type="InterPro" id="IPR011629">
    <property type="entry name" value="CobW-like_C"/>
</dbReference>
<dbReference type="InterPro" id="IPR003495">
    <property type="entry name" value="CobW/HypB/UreG_nucleotide-bd"/>
</dbReference>
<dbReference type="InterPro" id="IPR027417">
    <property type="entry name" value="P-loop_NTPase"/>
</dbReference>
<dbReference type="InterPro" id="IPR051316">
    <property type="entry name" value="Zinc-reg_GTPase_activator"/>
</dbReference>
<dbReference type="PANTHER" id="PTHR13748">
    <property type="entry name" value="COBW-RELATED"/>
    <property type="match status" value="1"/>
</dbReference>
<dbReference type="PANTHER" id="PTHR13748:SF46">
    <property type="entry name" value="ZINC CHAPERONE YEIR"/>
    <property type="match status" value="1"/>
</dbReference>
<dbReference type="Pfam" id="PF02492">
    <property type="entry name" value="cobW"/>
    <property type="match status" value="1"/>
</dbReference>
<dbReference type="Pfam" id="PF07683">
    <property type="entry name" value="CobW_C"/>
    <property type="match status" value="1"/>
</dbReference>
<dbReference type="SMART" id="SM00833">
    <property type="entry name" value="CobW_C"/>
    <property type="match status" value="1"/>
</dbReference>
<dbReference type="SUPFAM" id="SSF52540">
    <property type="entry name" value="P-loop containing nucleoside triphosphate hydrolases"/>
    <property type="match status" value="1"/>
</dbReference>
<gene>
    <name type="primary">yeiR</name>
    <name type="ordered locus">b2173</name>
    <name type="ordered locus">JW2161</name>
</gene>
<sequence length="328" mass="36113">MTRTNLITGFLGSGKTTSILHLLAHKDPNEKWAVLVNEFGEVGIDGALLADSGALLKEIPGGCMCCVNGLPMQVGLNTLLRQGKPDRLLIEPTGLGHPKQILDLLTAPVYEPWIDLRATLCILDPRLLLDEKSASNENFRDQLAAADIIVANKSDRTTPESEQALQRWWQQNGGDRQLIHSEHGKVDGHLLDLPRRNLAELPASAAHSHQHVVKKGLAALSLPEHQRWRRSLNSGQGYQACGWIFDADTVFDTIGILEWARLAPVERVKGVLRIPEGLVRINRQGDDLHIETQNVAPPDSRIELISSSEADWNALQSALLKLRLATTA</sequence>
<comment type="function">
    <text evidence="2">Zinc chaperone that directly transfers zinc cofactor to target proteins, thereby activating them (By similarity). Zinc is transferred from the CXCC motif in the GTPase domain to the zinc binding site in target proteins in a process requiring GTP hydrolysis (By similarity).</text>
</comment>
<comment type="catalytic activity">
    <reaction evidence="4">
        <text>GTP + H2O = GDP + phosphate + H(+)</text>
        <dbReference type="Rhea" id="RHEA:19669"/>
        <dbReference type="ChEBI" id="CHEBI:15377"/>
        <dbReference type="ChEBI" id="CHEBI:15378"/>
        <dbReference type="ChEBI" id="CHEBI:37565"/>
        <dbReference type="ChEBI" id="CHEBI:43474"/>
        <dbReference type="ChEBI" id="CHEBI:58189"/>
    </reaction>
    <physiologicalReaction direction="left-to-right" evidence="4">
        <dbReference type="Rhea" id="RHEA:19670"/>
    </physiologicalReaction>
</comment>
<comment type="activity regulation">
    <text evidence="4">GTPase activity is enhanced by Zn(2+) binding.</text>
</comment>
<comment type="biophysicochemical properties">
    <kinetics>
        <KM evidence="4">220 uM for GTP (in the absence of metal ions)</KM>
        <KM evidence="4">177 uM for GTP (in the presence of Ni(2+))</KM>
        <KM evidence="4">49 uM for GTP (in the presence of Zn(2+))</KM>
        <text evidence="4">kcat is 0.19 min(-1). kcat is 0.33 min(-1) in the presence of Ni(2+). kcat is 0.32 min(-1) in the presence of Zn(2+).</text>
    </kinetics>
</comment>
<comment type="subunit">
    <text evidence="4">Oligomerizes in the presence of Zn(2+).</text>
</comment>
<comment type="disruption phenotype">
    <text evidence="4">Deletion of the gene increases the sensitivity of E.coli to the metal chelator EDTA and sensitivity to cadmium.</text>
</comment>
<comment type="similarity">
    <text evidence="5">Belongs to the SIMIBI class G3E GTPase family. ZNG1 subfamily.</text>
</comment>
<accession>P33030</accession>
<accession>P76444</accession>
<accession>P94761</accession>
<proteinExistence type="evidence at protein level"/>
<name>YEIR_ECOLI</name>
<keyword id="KW-0143">Chaperone</keyword>
<keyword id="KW-0342">GTP-binding</keyword>
<keyword id="KW-0378">Hydrolase</keyword>
<keyword id="KW-0479">Metal-binding</keyword>
<keyword id="KW-0547">Nucleotide-binding</keyword>
<keyword id="KW-1185">Reference proteome</keyword>
<keyword id="KW-0862">Zinc</keyword>
<organism>
    <name type="scientific">Escherichia coli (strain K12)</name>
    <dbReference type="NCBI Taxonomy" id="83333"/>
    <lineage>
        <taxon>Bacteria</taxon>
        <taxon>Pseudomonadati</taxon>
        <taxon>Pseudomonadota</taxon>
        <taxon>Gammaproteobacteria</taxon>
        <taxon>Enterobacterales</taxon>
        <taxon>Enterobacteriaceae</taxon>
        <taxon>Escherichia</taxon>
    </lineage>
</organism>